<evidence type="ECO:0000255" key="1">
    <source>
        <dbReference type="HAMAP-Rule" id="MF_00189"/>
    </source>
</evidence>
<proteinExistence type="inferred from homology"/>
<keyword id="KW-0997">Cell inner membrane</keyword>
<keyword id="KW-1003">Cell membrane</keyword>
<keyword id="KW-0472">Membrane</keyword>
<keyword id="KW-1185">Reference proteome</keyword>
<keyword id="KW-0812">Transmembrane</keyword>
<keyword id="KW-1133">Transmembrane helix</keyword>
<dbReference type="EMBL" id="CP000284">
    <property type="protein sequence ID" value="ABE50145.1"/>
    <property type="molecule type" value="Genomic_DNA"/>
</dbReference>
<dbReference type="RefSeq" id="WP_011480099.1">
    <property type="nucleotide sequence ID" value="NC_007947.1"/>
</dbReference>
<dbReference type="STRING" id="265072.Mfla_1878"/>
<dbReference type="KEGG" id="mfa:Mfla_1878"/>
<dbReference type="eggNOG" id="COG2917">
    <property type="taxonomic scope" value="Bacteria"/>
</dbReference>
<dbReference type="HOGENOM" id="CLU_089554_2_0_4"/>
<dbReference type="OrthoDB" id="9788219at2"/>
<dbReference type="Proteomes" id="UP000002440">
    <property type="component" value="Chromosome"/>
</dbReference>
<dbReference type="GO" id="GO:0005886">
    <property type="term" value="C:plasma membrane"/>
    <property type="evidence" value="ECO:0007669"/>
    <property type="project" value="UniProtKB-SubCell"/>
</dbReference>
<dbReference type="HAMAP" id="MF_00189">
    <property type="entry name" value="YciB"/>
    <property type="match status" value="1"/>
</dbReference>
<dbReference type="InterPro" id="IPR006008">
    <property type="entry name" value="YciB"/>
</dbReference>
<dbReference type="NCBIfam" id="TIGR00997">
    <property type="entry name" value="ispZ"/>
    <property type="match status" value="1"/>
</dbReference>
<dbReference type="NCBIfam" id="NF001325">
    <property type="entry name" value="PRK00259.1-3"/>
    <property type="match status" value="1"/>
</dbReference>
<dbReference type="PANTHER" id="PTHR36917:SF1">
    <property type="entry name" value="INNER MEMBRANE-SPANNING PROTEIN YCIB"/>
    <property type="match status" value="1"/>
</dbReference>
<dbReference type="PANTHER" id="PTHR36917">
    <property type="entry name" value="INTRACELLULAR SEPTATION PROTEIN A-RELATED"/>
    <property type="match status" value="1"/>
</dbReference>
<dbReference type="Pfam" id="PF04279">
    <property type="entry name" value="IspA"/>
    <property type="match status" value="1"/>
</dbReference>
<sequence>MKFLYDLFPVILFFIVYKLFGIYEATAAAIAATIAQIAWAKITTGKVDNALIMSGVIIVVFGGATLWLQDESFIKWKPTILYWVFTVGLLGSQWLFKRNLIRGLMEKQITMPDPIWSRLNLAWAIFFLLLGFLNLYVAYNYSTDLWVDFKLFGTMGLMFVFVIGQTLLLNKHITEQDKK</sequence>
<organism>
    <name type="scientific">Methylobacillus flagellatus (strain ATCC 51484 / DSM 6875 / VKM B-1610 / KT)</name>
    <dbReference type="NCBI Taxonomy" id="265072"/>
    <lineage>
        <taxon>Bacteria</taxon>
        <taxon>Pseudomonadati</taxon>
        <taxon>Pseudomonadota</taxon>
        <taxon>Betaproteobacteria</taxon>
        <taxon>Nitrosomonadales</taxon>
        <taxon>Methylophilaceae</taxon>
        <taxon>Methylobacillus</taxon>
    </lineage>
</organism>
<feature type="chain" id="PRO_1000021029" description="Inner membrane-spanning protein YciB">
    <location>
        <begin position="1"/>
        <end position="179"/>
    </location>
</feature>
<feature type="transmembrane region" description="Helical" evidence="1">
    <location>
        <begin position="3"/>
        <end position="23"/>
    </location>
</feature>
<feature type="transmembrane region" description="Helical" evidence="1">
    <location>
        <begin position="49"/>
        <end position="69"/>
    </location>
</feature>
<feature type="transmembrane region" description="Helical" evidence="1">
    <location>
        <begin position="76"/>
        <end position="96"/>
    </location>
</feature>
<feature type="transmembrane region" description="Helical" evidence="1">
    <location>
        <begin position="119"/>
        <end position="139"/>
    </location>
</feature>
<feature type="transmembrane region" description="Helical" evidence="1">
    <location>
        <begin position="149"/>
        <end position="169"/>
    </location>
</feature>
<accession>Q1H042</accession>
<protein>
    <recommendedName>
        <fullName evidence="1">Inner membrane-spanning protein YciB</fullName>
    </recommendedName>
</protein>
<gene>
    <name evidence="1" type="primary">yciB</name>
    <name type="ordered locus">Mfla_1878</name>
</gene>
<name>YCIB_METFK</name>
<reference key="1">
    <citation type="submission" date="2006-03" db="EMBL/GenBank/DDBJ databases">
        <title>Complete sequence of Methylobacillus flagellatus KT.</title>
        <authorList>
            <consortium name="US DOE Joint Genome Institute"/>
            <person name="Copeland A."/>
            <person name="Lucas S."/>
            <person name="Lapidus A."/>
            <person name="Barry K."/>
            <person name="Detter J.C."/>
            <person name="Glavina del Rio T."/>
            <person name="Hammon N."/>
            <person name="Israni S."/>
            <person name="Dalin E."/>
            <person name="Tice H."/>
            <person name="Pitluck S."/>
            <person name="Brettin T."/>
            <person name="Bruce D."/>
            <person name="Han C."/>
            <person name="Tapia R."/>
            <person name="Saunders E."/>
            <person name="Gilna P."/>
            <person name="Schmutz J."/>
            <person name="Larimer F."/>
            <person name="Land M."/>
            <person name="Kyrpides N."/>
            <person name="Anderson I."/>
            <person name="Richardson P."/>
        </authorList>
    </citation>
    <scope>NUCLEOTIDE SEQUENCE [LARGE SCALE GENOMIC DNA]</scope>
    <source>
        <strain>ATCC 51484 / DSM 6875 / VKM B-1610 / KT</strain>
    </source>
</reference>
<comment type="function">
    <text evidence="1">Plays a role in cell envelope biogenesis, maintenance of cell envelope integrity and membrane homeostasis.</text>
</comment>
<comment type="subcellular location">
    <subcellularLocation>
        <location evidence="1">Cell inner membrane</location>
        <topology evidence="1">Multi-pass membrane protein</topology>
    </subcellularLocation>
</comment>
<comment type="similarity">
    <text evidence="1">Belongs to the YciB family.</text>
</comment>